<dbReference type="EC" id="3.1.3.16"/>
<dbReference type="EMBL" id="AB022217">
    <property type="protein sequence ID" value="BAB02747.1"/>
    <property type="molecule type" value="Genomic_DNA"/>
</dbReference>
<dbReference type="EMBL" id="CP002686">
    <property type="protein sequence ID" value="AEE75836.1"/>
    <property type="molecule type" value="Genomic_DNA"/>
</dbReference>
<dbReference type="EMBL" id="CP002686">
    <property type="protein sequence ID" value="ANM63918.1"/>
    <property type="molecule type" value="Genomic_DNA"/>
</dbReference>
<dbReference type="EMBL" id="CP002686">
    <property type="protein sequence ID" value="ANM63920.1"/>
    <property type="molecule type" value="Genomic_DNA"/>
</dbReference>
<dbReference type="EMBL" id="AY136458">
    <property type="protein sequence ID" value="AAM97123.1"/>
    <property type="molecule type" value="mRNA"/>
</dbReference>
<dbReference type="EMBL" id="BT008864">
    <property type="protein sequence ID" value="AAP68303.1"/>
    <property type="molecule type" value="mRNA"/>
</dbReference>
<dbReference type="EMBL" id="AY086406">
    <property type="protein sequence ID" value="AAM64473.1"/>
    <property type="molecule type" value="mRNA"/>
</dbReference>
<dbReference type="RefSeq" id="NP_001325978.1">
    <property type="nucleotide sequence ID" value="NM_001338238.1"/>
</dbReference>
<dbReference type="RefSeq" id="NP_001325980.1">
    <property type="nucleotide sequence ID" value="NM_001338240.1"/>
</dbReference>
<dbReference type="RefSeq" id="NP_566554.1">
    <property type="nucleotide sequence ID" value="NM_112529.3"/>
</dbReference>
<dbReference type="SMR" id="Q9LUS8"/>
<dbReference type="BioGRID" id="6239">
    <property type="interactions" value="1"/>
</dbReference>
<dbReference type="FunCoup" id="Q9LUS8">
    <property type="interactions" value="1060"/>
</dbReference>
<dbReference type="IntAct" id="Q9LUS8">
    <property type="interactions" value="2"/>
</dbReference>
<dbReference type="STRING" id="3702.Q9LUS8"/>
<dbReference type="iPTMnet" id="Q9LUS8"/>
<dbReference type="PaxDb" id="3702-AT3G16560.1"/>
<dbReference type="ProteomicsDB" id="248798"/>
<dbReference type="EnsemblPlants" id="AT3G16560.1">
    <property type="protein sequence ID" value="AT3G16560.1"/>
    <property type="gene ID" value="AT3G16560"/>
</dbReference>
<dbReference type="EnsemblPlants" id="AT3G16560.2">
    <property type="protein sequence ID" value="AT3G16560.2"/>
    <property type="gene ID" value="AT3G16560"/>
</dbReference>
<dbReference type="EnsemblPlants" id="AT3G16560.4">
    <property type="protein sequence ID" value="AT3G16560.4"/>
    <property type="gene ID" value="AT3G16560"/>
</dbReference>
<dbReference type="GeneID" id="820905"/>
<dbReference type="Gramene" id="AT3G16560.1">
    <property type="protein sequence ID" value="AT3G16560.1"/>
    <property type="gene ID" value="AT3G16560"/>
</dbReference>
<dbReference type="Gramene" id="AT3G16560.2">
    <property type="protein sequence ID" value="AT3G16560.2"/>
    <property type="gene ID" value="AT3G16560"/>
</dbReference>
<dbReference type="Gramene" id="AT3G16560.4">
    <property type="protein sequence ID" value="AT3G16560.4"/>
    <property type="gene ID" value="AT3G16560"/>
</dbReference>
<dbReference type="KEGG" id="ath:AT3G16560"/>
<dbReference type="Araport" id="AT3G16560"/>
<dbReference type="TAIR" id="AT3G16560"/>
<dbReference type="eggNOG" id="KOG0700">
    <property type="taxonomic scope" value="Eukaryota"/>
</dbReference>
<dbReference type="HOGENOM" id="CLU_013173_12_3_1"/>
<dbReference type="InParanoid" id="Q9LUS8"/>
<dbReference type="OMA" id="CNSHKGI"/>
<dbReference type="PhylomeDB" id="Q9LUS8"/>
<dbReference type="PRO" id="PR:Q9LUS8"/>
<dbReference type="Proteomes" id="UP000006548">
    <property type="component" value="Chromosome 3"/>
</dbReference>
<dbReference type="ExpressionAtlas" id="Q9LUS8">
    <property type="expression patterns" value="baseline and differential"/>
</dbReference>
<dbReference type="GO" id="GO:0046872">
    <property type="term" value="F:metal ion binding"/>
    <property type="evidence" value="ECO:0007669"/>
    <property type="project" value="UniProtKB-KW"/>
</dbReference>
<dbReference type="GO" id="GO:0004722">
    <property type="term" value="F:protein serine/threonine phosphatase activity"/>
    <property type="evidence" value="ECO:0007669"/>
    <property type="project" value="UniProtKB-EC"/>
</dbReference>
<dbReference type="CDD" id="cd00143">
    <property type="entry name" value="PP2Cc"/>
    <property type="match status" value="1"/>
</dbReference>
<dbReference type="FunFam" id="3.60.40.10:FF:000043">
    <property type="entry name" value="Probable protein phosphatase 2C 40"/>
    <property type="match status" value="1"/>
</dbReference>
<dbReference type="Gene3D" id="3.60.40.10">
    <property type="entry name" value="PPM-type phosphatase domain"/>
    <property type="match status" value="1"/>
</dbReference>
<dbReference type="InterPro" id="IPR015655">
    <property type="entry name" value="PP2C"/>
</dbReference>
<dbReference type="InterPro" id="IPR036457">
    <property type="entry name" value="PPM-type-like_dom_sf"/>
</dbReference>
<dbReference type="InterPro" id="IPR001932">
    <property type="entry name" value="PPM-type_phosphatase-like_dom"/>
</dbReference>
<dbReference type="PANTHER" id="PTHR13832">
    <property type="entry name" value="PROTEIN PHOSPHATASE 2C"/>
    <property type="match status" value="1"/>
</dbReference>
<dbReference type="PANTHER" id="PTHR13832:SF550">
    <property type="entry name" value="PROTEIN PHOSPHATASE 2C 40-RELATED"/>
    <property type="match status" value="1"/>
</dbReference>
<dbReference type="Pfam" id="PF00481">
    <property type="entry name" value="PP2C"/>
    <property type="match status" value="1"/>
</dbReference>
<dbReference type="SMART" id="SM00332">
    <property type="entry name" value="PP2Cc"/>
    <property type="match status" value="1"/>
</dbReference>
<dbReference type="SUPFAM" id="SSF81606">
    <property type="entry name" value="PP2C-like"/>
    <property type="match status" value="1"/>
</dbReference>
<dbReference type="PROSITE" id="PS51746">
    <property type="entry name" value="PPM_2"/>
    <property type="match status" value="1"/>
</dbReference>
<reference key="1">
    <citation type="journal article" date="2000" name="DNA Res.">
        <title>Structural analysis of Arabidopsis thaliana chromosome 3. I. Sequence features of the regions of 4,504,864 bp covered by sixty P1 and TAC clones.</title>
        <authorList>
            <person name="Sato S."/>
            <person name="Nakamura Y."/>
            <person name="Kaneko T."/>
            <person name="Katoh T."/>
            <person name="Asamizu E."/>
            <person name="Tabata S."/>
        </authorList>
    </citation>
    <scope>NUCLEOTIDE SEQUENCE [LARGE SCALE GENOMIC DNA]</scope>
    <source>
        <strain>cv. Columbia</strain>
    </source>
</reference>
<reference key="2">
    <citation type="journal article" date="2017" name="Plant J.">
        <title>Araport11: a complete reannotation of the Arabidopsis thaliana reference genome.</title>
        <authorList>
            <person name="Cheng C.Y."/>
            <person name="Krishnakumar V."/>
            <person name="Chan A.P."/>
            <person name="Thibaud-Nissen F."/>
            <person name="Schobel S."/>
            <person name="Town C.D."/>
        </authorList>
    </citation>
    <scope>GENOME REANNOTATION</scope>
    <source>
        <strain>cv. Columbia</strain>
    </source>
</reference>
<reference key="3">
    <citation type="journal article" date="2003" name="Science">
        <title>Empirical analysis of transcriptional activity in the Arabidopsis genome.</title>
        <authorList>
            <person name="Yamada K."/>
            <person name="Lim J."/>
            <person name="Dale J.M."/>
            <person name="Chen H."/>
            <person name="Shinn P."/>
            <person name="Palm C.J."/>
            <person name="Southwick A.M."/>
            <person name="Wu H.C."/>
            <person name="Kim C.J."/>
            <person name="Nguyen M."/>
            <person name="Pham P.K."/>
            <person name="Cheuk R.F."/>
            <person name="Karlin-Newmann G."/>
            <person name="Liu S.X."/>
            <person name="Lam B."/>
            <person name="Sakano H."/>
            <person name="Wu T."/>
            <person name="Yu G."/>
            <person name="Miranda M."/>
            <person name="Quach H.L."/>
            <person name="Tripp M."/>
            <person name="Chang C.H."/>
            <person name="Lee J.M."/>
            <person name="Toriumi M.J."/>
            <person name="Chan M.M."/>
            <person name="Tang C.C."/>
            <person name="Onodera C.S."/>
            <person name="Deng J.M."/>
            <person name="Akiyama K."/>
            <person name="Ansari Y."/>
            <person name="Arakawa T."/>
            <person name="Banh J."/>
            <person name="Banno F."/>
            <person name="Bowser L."/>
            <person name="Brooks S.Y."/>
            <person name="Carninci P."/>
            <person name="Chao Q."/>
            <person name="Choy N."/>
            <person name="Enju A."/>
            <person name="Goldsmith A.D."/>
            <person name="Gurjal M."/>
            <person name="Hansen N.F."/>
            <person name="Hayashizaki Y."/>
            <person name="Johnson-Hopson C."/>
            <person name="Hsuan V.W."/>
            <person name="Iida K."/>
            <person name="Karnes M."/>
            <person name="Khan S."/>
            <person name="Koesema E."/>
            <person name="Ishida J."/>
            <person name="Jiang P.X."/>
            <person name="Jones T."/>
            <person name="Kawai J."/>
            <person name="Kamiya A."/>
            <person name="Meyers C."/>
            <person name="Nakajima M."/>
            <person name="Narusaka M."/>
            <person name="Seki M."/>
            <person name="Sakurai T."/>
            <person name="Satou M."/>
            <person name="Tamse R."/>
            <person name="Vaysberg M."/>
            <person name="Wallender E.K."/>
            <person name="Wong C."/>
            <person name="Yamamura Y."/>
            <person name="Yuan S."/>
            <person name="Shinozaki K."/>
            <person name="Davis R.W."/>
            <person name="Theologis A."/>
            <person name="Ecker J.R."/>
        </authorList>
    </citation>
    <scope>NUCLEOTIDE SEQUENCE [LARGE SCALE MRNA]</scope>
    <source>
        <strain>cv. Columbia</strain>
    </source>
</reference>
<reference key="4">
    <citation type="submission" date="2002-03" db="EMBL/GenBank/DDBJ databases">
        <title>Full-length cDNA from Arabidopsis thaliana.</title>
        <authorList>
            <person name="Brover V.V."/>
            <person name="Troukhan M.E."/>
            <person name="Alexandrov N.A."/>
            <person name="Lu Y.-P."/>
            <person name="Flavell R.B."/>
            <person name="Feldmann K.A."/>
        </authorList>
    </citation>
    <scope>NUCLEOTIDE SEQUENCE [LARGE SCALE MRNA]</scope>
</reference>
<reference key="5">
    <citation type="journal article" date="2008" name="BMC Genomics">
        <title>Genome-wide and expression analysis of protein phosphatase 2C in rice and Arabidopsis.</title>
        <authorList>
            <person name="Xue T."/>
            <person name="Wang D."/>
            <person name="Zhang S."/>
            <person name="Ehlting J."/>
            <person name="Ni F."/>
            <person name="Jacab S."/>
            <person name="Zheng C."/>
            <person name="Zhong Y."/>
        </authorList>
    </citation>
    <scope>GENE FAMILY</scope>
    <scope>NOMENCLATURE</scope>
</reference>
<comment type="catalytic activity">
    <reaction>
        <text>O-phospho-L-seryl-[protein] + H2O = L-seryl-[protein] + phosphate</text>
        <dbReference type="Rhea" id="RHEA:20629"/>
        <dbReference type="Rhea" id="RHEA-COMP:9863"/>
        <dbReference type="Rhea" id="RHEA-COMP:11604"/>
        <dbReference type="ChEBI" id="CHEBI:15377"/>
        <dbReference type="ChEBI" id="CHEBI:29999"/>
        <dbReference type="ChEBI" id="CHEBI:43474"/>
        <dbReference type="ChEBI" id="CHEBI:83421"/>
        <dbReference type="EC" id="3.1.3.16"/>
    </reaction>
</comment>
<comment type="catalytic activity">
    <reaction>
        <text>O-phospho-L-threonyl-[protein] + H2O = L-threonyl-[protein] + phosphate</text>
        <dbReference type="Rhea" id="RHEA:47004"/>
        <dbReference type="Rhea" id="RHEA-COMP:11060"/>
        <dbReference type="Rhea" id="RHEA-COMP:11605"/>
        <dbReference type="ChEBI" id="CHEBI:15377"/>
        <dbReference type="ChEBI" id="CHEBI:30013"/>
        <dbReference type="ChEBI" id="CHEBI:43474"/>
        <dbReference type="ChEBI" id="CHEBI:61977"/>
        <dbReference type="EC" id="3.1.3.16"/>
    </reaction>
</comment>
<comment type="cofactor">
    <cofactor evidence="1">
        <name>Mg(2+)</name>
        <dbReference type="ChEBI" id="CHEBI:18420"/>
    </cofactor>
    <cofactor evidence="1">
        <name>Mn(2+)</name>
        <dbReference type="ChEBI" id="CHEBI:29035"/>
    </cofactor>
    <text evidence="1">Binds 2 magnesium or manganese ions per subunit.</text>
</comment>
<comment type="interaction">
    <interactant intactId="EBI-25519200">
        <id>Q9LUS8</id>
    </interactant>
    <interactant intactId="EBI-4426649">
        <id>Q17TI5</id>
        <label>BRX</label>
    </interactant>
    <organismsDiffer>false</organismsDiffer>
    <experiments>3</experiments>
</comment>
<comment type="similarity">
    <text evidence="3">Belongs to the PP2C family.</text>
</comment>
<accession>Q9LUS8</accession>
<accession>Q8LCU0</accession>
<proteinExistence type="evidence at protein level"/>
<name>P2C40_ARATH</name>
<gene>
    <name type="ordered locus">At3g16560</name>
    <name type="ORF">MDC8.3</name>
</gene>
<protein>
    <recommendedName>
        <fullName>Probable protein phosphatase 2C 40</fullName>
        <shortName>AtPP2C40</shortName>
        <ecNumber>3.1.3.16</ecNumber>
    </recommendedName>
    <alternativeName>
        <fullName>Protein phosphatase 2C homolog 1</fullName>
    </alternativeName>
</protein>
<evidence type="ECO:0000250" key="1"/>
<evidence type="ECO:0000255" key="2">
    <source>
        <dbReference type="PROSITE-ProRule" id="PRU01082"/>
    </source>
</evidence>
<evidence type="ECO:0000305" key="3"/>
<keyword id="KW-0378">Hydrolase</keyword>
<keyword id="KW-0460">Magnesium</keyword>
<keyword id="KW-0464">Manganese</keyword>
<keyword id="KW-0479">Metal-binding</keyword>
<keyword id="KW-0904">Protein phosphatase</keyword>
<keyword id="KW-1185">Reference proteome</keyword>
<organism>
    <name type="scientific">Arabidopsis thaliana</name>
    <name type="common">Mouse-ear cress</name>
    <dbReference type="NCBI Taxonomy" id="3702"/>
    <lineage>
        <taxon>Eukaryota</taxon>
        <taxon>Viridiplantae</taxon>
        <taxon>Streptophyta</taxon>
        <taxon>Embryophyta</taxon>
        <taxon>Tracheophyta</taxon>
        <taxon>Spermatophyta</taxon>
        <taxon>Magnoliopsida</taxon>
        <taxon>eudicotyledons</taxon>
        <taxon>Gunneridae</taxon>
        <taxon>Pentapetalae</taxon>
        <taxon>rosids</taxon>
        <taxon>malvids</taxon>
        <taxon>Brassicales</taxon>
        <taxon>Brassicaceae</taxon>
        <taxon>Camelineae</taxon>
        <taxon>Arabidopsis</taxon>
    </lineage>
</organism>
<sequence length="493" mass="53614">MQEGTDPYGEIEISFGYQCNNKKIGIPEDKIADGREVLGGFRLQKTSSFSCLSGAALSGNPTLANTNICNGVIGSEILPSLDSPKSFRKVPSSPALSKLDILSPSLHGSMVSLSCSSSTSPSPPEPESCYLTSMSSPSSVNEGFLLSAMEVQVAGGAAGEDRVQAVCSEENGWLFCAIYDGFNGRDAADFLACTLYESIVFHLQLLDRQMKQTKSDDDGEKLELLSNISNVDYSSTDLFRQGVLDCLNRALFQAETDFLRMVEQEMEERPDLVSVGSCVLVTLLVGKDLYVLNLGDSRAVLATYNGNKKLQAVQLTEDHTVDNEVEEARLLSEHLDDPKIVIGGKIKGKLKVTRALGVGYLKKEKLNDALMGILRVRNLLSPPYVSVEPSMRVHKITESDHFVIVASDGLFDFFSNEEAIGLVHSFVSSNPSGDPAKFLLERLVAKAAARAGFTLEELTNVPAGRRRRYHDDVTIMVITLGTDQRTSKASTFV</sequence>
<feature type="chain" id="PRO_0000301257" description="Probable protein phosphatase 2C 40">
    <location>
        <begin position="1"/>
        <end position="493"/>
    </location>
</feature>
<feature type="domain" description="PPM-type phosphatase" evidence="2">
    <location>
        <begin position="145"/>
        <end position="480"/>
    </location>
</feature>
<feature type="binding site" evidence="1">
    <location>
        <position position="180"/>
    </location>
    <ligand>
        <name>Mn(2+)</name>
        <dbReference type="ChEBI" id="CHEBI:29035"/>
        <label>1</label>
    </ligand>
</feature>
<feature type="binding site" evidence="1">
    <location>
        <position position="180"/>
    </location>
    <ligand>
        <name>Mn(2+)</name>
        <dbReference type="ChEBI" id="CHEBI:29035"/>
        <label>2</label>
    </ligand>
</feature>
<feature type="binding site" evidence="1">
    <location>
        <position position="181"/>
    </location>
    <ligand>
        <name>Mn(2+)</name>
        <dbReference type="ChEBI" id="CHEBI:29035"/>
        <label>1</label>
    </ligand>
</feature>
<feature type="binding site" evidence="1">
    <location>
        <position position="408"/>
    </location>
    <ligand>
        <name>Mn(2+)</name>
        <dbReference type="ChEBI" id="CHEBI:29035"/>
        <label>2</label>
    </ligand>
</feature>
<feature type="binding site" evidence="1">
    <location>
        <position position="471"/>
    </location>
    <ligand>
        <name>Mn(2+)</name>
        <dbReference type="ChEBI" id="CHEBI:29035"/>
        <label>2</label>
    </ligand>
</feature>
<feature type="sequence conflict" description="In Ref. 4; AAM64473." evidence="3" ref="4">
    <original>G</original>
    <variation>E</variation>
    <location>
        <position position="372"/>
    </location>
</feature>